<evidence type="ECO:0000250" key="1"/>
<evidence type="ECO:0000256" key="2">
    <source>
        <dbReference type="SAM" id="MobiDB-lite"/>
    </source>
</evidence>
<evidence type="ECO:0000305" key="3"/>
<gene>
    <name type="primary">STS1</name>
    <name type="ORF">PGUG_01693</name>
</gene>
<sequence length="317" mass="36480">MATGYNWVPEKYLESKSKHKYGDILQKSDSFKHDLGNSFRKRRHDDDYGKVGKPQSQPTRPIQRSKRIKTPKIIGQALPVSRVVEVLDHRSLQQLLTKLLTIHPEVATTINKLSPRPELKDCLETLRERFDEIINHLPYKCDVESDYSYLRVKPHLNEFLSCLSDLTLSFLPPIEVNTLQSLTFLDYVTSLIHQLPNFANTEFQYTKVQAYDQLANTWIIAFNHSLNDEDCQEVASTKDAKVESLSKIVKMIEDNDLINKLEKHNDLSQGKFRMVIELVKATVDNYESLSESLRAKSLLGDMFTVDYSNFVAAQSLN</sequence>
<proteinExistence type="inferred from homology"/>
<comment type="function">
    <text evidence="1">Involved in ubiquitin-mediated protein degradation. Regulatory factor in the ubiquitin/proteasome pathway that controls the turnover of proteasome substrates. Targets proteasomes to the nucleus and facilitates the degradation of nuclear proteins (By similarity).</text>
</comment>
<comment type="subunit">
    <text evidence="1">Binds the proteasome.</text>
</comment>
<comment type="subcellular location">
    <subcellularLocation>
        <location evidence="1">Cytoplasm</location>
    </subcellularLocation>
    <subcellularLocation>
        <location evidence="1">Nucleus</location>
    </subcellularLocation>
</comment>
<comment type="similarity">
    <text evidence="3">Belongs to the cut8/STS1 family.</text>
</comment>
<name>STS1_PICGU</name>
<dbReference type="EMBL" id="CH408156">
    <property type="protein sequence ID" value="EDK37595.2"/>
    <property type="molecule type" value="Genomic_DNA"/>
</dbReference>
<dbReference type="RefSeq" id="XP_001486022.1">
    <property type="nucleotide sequence ID" value="XM_001485972.1"/>
</dbReference>
<dbReference type="SMR" id="A5DEJ2"/>
<dbReference type="FunCoup" id="A5DEJ2">
    <property type="interactions" value="13"/>
</dbReference>
<dbReference type="STRING" id="294746.A5DEJ2"/>
<dbReference type="GeneID" id="5127524"/>
<dbReference type="KEGG" id="pgu:PGUG_01693"/>
<dbReference type="VEuPathDB" id="FungiDB:PGUG_01693"/>
<dbReference type="eggNOG" id="ENOG502RNK4">
    <property type="taxonomic scope" value="Eukaryota"/>
</dbReference>
<dbReference type="HOGENOM" id="CLU_054606_2_0_1"/>
<dbReference type="InParanoid" id="A5DEJ2"/>
<dbReference type="OMA" id="TITQYAN"/>
<dbReference type="OrthoDB" id="10061064at2759"/>
<dbReference type="Proteomes" id="UP000001997">
    <property type="component" value="Unassembled WGS sequence"/>
</dbReference>
<dbReference type="GO" id="GO:0005737">
    <property type="term" value="C:cytoplasm"/>
    <property type="evidence" value="ECO:0007669"/>
    <property type="project" value="UniProtKB-SubCell"/>
</dbReference>
<dbReference type="GO" id="GO:0031965">
    <property type="term" value="C:nuclear membrane"/>
    <property type="evidence" value="ECO:0007669"/>
    <property type="project" value="TreeGrafter"/>
</dbReference>
<dbReference type="GO" id="GO:0070628">
    <property type="term" value="F:proteasome binding"/>
    <property type="evidence" value="ECO:0007669"/>
    <property type="project" value="TreeGrafter"/>
</dbReference>
<dbReference type="GO" id="GO:0071630">
    <property type="term" value="P:nuclear protein quality control by the ubiquitin-proteasome system"/>
    <property type="evidence" value="ECO:0007669"/>
    <property type="project" value="InterPro"/>
</dbReference>
<dbReference type="GO" id="GO:0031144">
    <property type="term" value="P:proteasome localization"/>
    <property type="evidence" value="ECO:0007669"/>
    <property type="project" value="InterPro"/>
</dbReference>
<dbReference type="GO" id="GO:0015031">
    <property type="term" value="P:protein transport"/>
    <property type="evidence" value="ECO:0007669"/>
    <property type="project" value="UniProtKB-KW"/>
</dbReference>
<dbReference type="Gene3D" id="1.20.58.1590">
    <property type="entry name" value="Tethering factor for nuclear proteasome Cut8/Sts1"/>
    <property type="match status" value="1"/>
</dbReference>
<dbReference type="InterPro" id="IPR013868">
    <property type="entry name" value="Cut8/Sts1_fam"/>
</dbReference>
<dbReference type="InterPro" id="IPR038422">
    <property type="entry name" value="Cut8/Sts1_sf"/>
</dbReference>
<dbReference type="PANTHER" id="PTHR28032">
    <property type="entry name" value="FI02826P"/>
    <property type="match status" value="1"/>
</dbReference>
<dbReference type="PANTHER" id="PTHR28032:SF1">
    <property type="entry name" value="FI02826P"/>
    <property type="match status" value="1"/>
</dbReference>
<dbReference type="Pfam" id="PF08559">
    <property type="entry name" value="Cut8"/>
    <property type="match status" value="1"/>
</dbReference>
<protein>
    <recommendedName>
        <fullName>Tethering factor for nuclear proteasome STS1</fullName>
    </recommendedName>
</protein>
<keyword id="KW-0963">Cytoplasm</keyword>
<keyword id="KW-0539">Nucleus</keyword>
<keyword id="KW-0653">Protein transport</keyword>
<keyword id="KW-1185">Reference proteome</keyword>
<keyword id="KW-0813">Transport</keyword>
<accession>A5DEJ2</accession>
<organism>
    <name type="scientific">Meyerozyma guilliermondii (strain ATCC 6260 / CBS 566 / DSM 6381 / JCM 1539 / NBRC 10279 / NRRL Y-324)</name>
    <name type="common">Yeast</name>
    <name type="synonym">Candida guilliermondii</name>
    <dbReference type="NCBI Taxonomy" id="294746"/>
    <lineage>
        <taxon>Eukaryota</taxon>
        <taxon>Fungi</taxon>
        <taxon>Dikarya</taxon>
        <taxon>Ascomycota</taxon>
        <taxon>Saccharomycotina</taxon>
        <taxon>Pichiomycetes</taxon>
        <taxon>Debaryomycetaceae</taxon>
        <taxon>Meyerozyma</taxon>
    </lineage>
</organism>
<reference key="1">
    <citation type="journal article" date="2009" name="Nature">
        <title>Evolution of pathogenicity and sexual reproduction in eight Candida genomes.</title>
        <authorList>
            <person name="Butler G."/>
            <person name="Rasmussen M.D."/>
            <person name="Lin M.F."/>
            <person name="Santos M.A.S."/>
            <person name="Sakthikumar S."/>
            <person name="Munro C.A."/>
            <person name="Rheinbay E."/>
            <person name="Grabherr M."/>
            <person name="Forche A."/>
            <person name="Reedy J.L."/>
            <person name="Agrafioti I."/>
            <person name="Arnaud M.B."/>
            <person name="Bates S."/>
            <person name="Brown A.J.P."/>
            <person name="Brunke S."/>
            <person name="Costanzo M.C."/>
            <person name="Fitzpatrick D.A."/>
            <person name="de Groot P.W.J."/>
            <person name="Harris D."/>
            <person name="Hoyer L.L."/>
            <person name="Hube B."/>
            <person name="Klis F.M."/>
            <person name="Kodira C."/>
            <person name="Lennard N."/>
            <person name="Logue M.E."/>
            <person name="Martin R."/>
            <person name="Neiman A.M."/>
            <person name="Nikolaou E."/>
            <person name="Quail M.A."/>
            <person name="Quinn J."/>
            <person name="Santos M.C."/>
            <person name="Schmitzberger F.F."/>
            <person name="Sherlock G."/>
            <person name="Shah P."/>
            <person name="Silverstein K.A.T."/>
            <person name="Skrzypek M.S."/>
            <person name="Soll D."/>
            <person name="Staggs R."/>
            <person name="Stansfield I."/>
            <person name="Stumpf M.P.H."/>
            <person name="Sudbery P.E."/>
            <person name="Srikantha T."/>
            <person name="Zeng Q."/>
            <person name="Berman J."/>
            <person name="Berriman M."/>
            <person name="Heitman J."/>
            <person name="Gow N.A.R."/>
            <person name="Lorenz M.C."/>
            <person name="Birren B.W."/>
            <person name="Kellis M."/>
            <person name="Cuomo C.A."/>
        </authorList>
    </citation>
    <scope>NUCLEOTIDE SEQUENCE [LARGE SCALE GENOMIC DNA]</scope>
    <source>
        <strain>ATCC 6260 / CBS 566 / DSM 6381 / JCM 1539 / NBRC 10279 / NRRL Y-324</strain>
    </source>
</reference>
<feature type="chain" id="PRO_0000409427" description="Tethering factor for nuclear proteasome STS1">
    <location>
        <begin position="1"/>
        <end position="317"/>
    </location>
</feature>
<feature type="region of interest" description="Disordered" evidence="2">
    <location>
        <begin position="34"/>
        <end position="65"/>
    </location>
</feature>